<gene>
    <name type="ordered locus">YER090C-A</name>
</gene>
<keyword id="KW-1185">Reference proteome</keyword>
<protein>
    <recommendedName>
        <fullName>Uncharacterized protein YER090C-A</fullName>
    </recommendedName>
</protein>
<dbReference type="EMBL" id="U18839">
    <property type="status" value="NOT_ANNOTATED_CDS"/>
    <property type="molecule type" value="Genomic_DNA"/>
</dbReference>
<dbReference type="EMBL" id="BK006939">
    <property type="status" value="NOT_ANNOTATED_CDS"/>
    <property type="molecule type" value="Genomic_DNA"/>
</dbReference>
<dbReference type="STRING" id="4932.YER090C-A"/>
<dbReference type="PaxDb" id="4932-YER090C-A"/>
<dbReference type="EnsemblFungi" id="YER090C-A_mRNA">
    <property type="protein sequence ID" value="YER090C-A"/>
    <property type="gene ID" value="YER090C-A"/>
</dbReference>
<dbReference type="AGR" id="SGD:S000029725"/>
<dbReference type="SGD" id="S000029725">
    <property type="gene designation" value="YER090C-A"/>
</dbReference>
<dbReference type="HOGENOM" id="CLU_3410823_0_0_1"/>
<dbReference type="InParanoid" id="P0C5M8"/>
<dbReference type="PRO" id="PR:P0C5M8"/>
<dbReference type="Proteomes" id="UP000002311">
    <property type="component" value="Chromosome V"/>
</dbReference>
<feature type="chain" id="PRO_0000309026" description="Uncharacterized protein YER090C-A">
    <location>
        <begin position="1"/>
        <end position="29"/>
    </location>
</feature>
<name>YE090_YEAST</name>
<reference key="1">
    <citation type="journal article" date="1997" name="Nature">
        <title>The nucleotide sequence of Saccharomyces cerevisiae chromosome V.</title>
        <authorList>
            <person name="Dietrich F.S."/>
            <person name="Mulligan J.T."/>
            <person name="Hennessy K.M."/>
            <person name="Yelton M.A."/>
            <person name="Allen E."/>
            <person name="Araujo R."/>
            <person name="Aviles E."/>
            <person name="Berno A."/>
            <person name="Brennan T."/>
            <person name="Carpenter J."/>
            <person name="Chen E."/>
            <person name="Cherry J.M."/>
            <person name="Chung E."/>
            <person name="Duncan M."/>
            <person name="Guzman E."/>
            <person name="Hartzell G."/>
            <person name="Hunicke-Smith S."/>
            <person name="Hyman R.W."/>
            <person name="Kayser A."/>
            <person name="Komp C."/>
            <person name="Lashkari D."/>
            <person name="Lew H."/>
            <person name="Lin D."/>
            <person name="Mosedale D."/>
            <person name="Nakahara K."/>
            <person name="Namath A."/>
            <person name="Norgren R."/>
            <person name="Oefner P."/>
            <person name="Oh C."/>
            <person name="Petel F.X."/>
            <person name="Roberts D."/>
            <person name="Sehl P."/>
            <person name="Schramm S."/>
            <person name="Shogren T."/>
            <person name="Smith V."/>
            <person name="Taylor P."/>
            <person name="Wei Y."/>
            <person name="Botstein D."/>
            <person name="Davis R.W."/>
        </authorList>
    </citation>
    <scope>NUCLEOTIDE SEQUENCE [LARGE SCALE GENOMIC DNA]</scope>
    <source>
        <strain>ATCC 204508 / S288c</strain>
    </source>
</reference>
<reference key="2">
    <citation type="journal article" date="2014" name="G3 (Bethesda)">
        <title>The reference genome sequence of Saccharomyces cerevisiae: Then and now.</title>
        <authorList>
            <person name="Engel S.R."/>
            <person name="Dietrich F.S."/>
            <person name="Fisk D.G."/>
            <person name="Binkley G."/>
            <person name="Balakrishnan R."/>
            <person name="Costanzo M.C."/>
            <person name="Dwight S.S."/>
            <person name="Hitz B.C."/>
            <person name="Karra K."/>
            <person name="Nash R.S."/>
            <person name="Weng S."/>
            <person name="Wong E.D."/>
            <person name="Lloyd P."/>
            <person name="Skrzypek M.S."/>
            <person name="Miyasato S.R."/>
            <person name="Simison M."/>
            <person name="Cherry J.M."/>
        </authorList>
    </citation>
    <scope>GENOME REANNOTATION</scope>
    <source>
        <strain>ATCC 204508 / S288c</strain>
    </source>
</reference>
<reference key="3">
    <citation type="journal article" date="2002" name="Genome Res.">
        <title>Parallel identification of new genes in Saccharomyces cerevisiae.</title>
        <authorList>
            <person name="Oshiro G."/>
            <person name="Wodicka L.M."/>
            <person name="Washburn M.P."/>
            <person name="Yates J.R. III"/>
            <person name="Lockhart D.J."/>
            <person name="Winzeler E.A."/>
        </authorList>
    </citation>
    <scope>IDENTIFICATION BY MASS SPECTROMETRY</scope>
</reference>
<sequence length="29" mass="3423">MPLEVLGHLSKAFLFLARNNEHSHKKYNQ</sequence>
<organism>
    <name type="scientific">Saccharomyces cerevisiae (strain ATCC 204508 / S288c)</name>
    <name type="common">Baker's yeast</name>
    <dbReference type="NCBI Taxonomy" id="559292"/>
    <lineage>
        <taxon>Eukaryota</taxon>
        <taxon>Fungi</taxon>
        <taxon>Dikarya</taxon>
        <taxon>Ascomycota</taxon>
        <taxon>Saccharomycotina</taxon>
        <taxon>Saccharomycetes</taxon>
        <taxon>Saccharomycetales</taxon>
        <taxon>Saccharomycetaceae</taxon>
        <taxon>Saccharomyces</taxon>
    </lineage>
</organism>
<accession>P0C5M8</accession>
<proteinExistence type="evidence at protein level"/>